<keyword id="KW-0378">Hydrolase</keyword>
<gene>
    <name evidence="1" type="primary">ymdB</name>
    <name type="ordered locus">Kvar_3321</name>
</gene>
<comment type="function">
    <text evidence="1">Deacetylates O-acetyl-ADP ribose to yield ADP-ribose and free acetate. Down-regulates ribonuclease 3 (RNase III) activity. Acts by interacting directly with the region of the ribonuclease that is required for dimerization/activation.</text>
</comment>
<comment type="catalytic activity">
    <reaction evidence="1">
        <text>3''-O-acetyl-ADP-D-ribose + H2O = ADP-D-ribose + acetate + H(+)</text>
        <dbReference type="Rhea" id="RHEA:59244"/>
        <dbReference type="ChEBI" id="CHEBI:15377"/>
        <dbReference type="ChEBI" id="CHEBI:15378"/>
        <dbReference type="ChEBI" id="CHEBI:30089"/>
        <dbReference type="ChEBI" id="CHEBI:57967"/>
        <dbReference type="ChEBI" id="CHEBI:142723"/>
        <dbReference type="EC" id="3.1.1.106"/>
    </reaction>
</comment>
<comment type="catalytic activity">
    <reaction evidence="1">
        <text>2''-O-acetyl-ADP-D-ribose + H2O = ADP-D-ribose + acetate + H(+)</text>
        <dbReference type="Rhea" id="RHEA:57060"/>
        <dbReference type="ChEBI" id="CHEBI:15377"/>
        <dbReference type="ChEBI" id="CHEBI:15378"/>
        <dbReference type="ChEBI" id="CHEBI:30089"/>
        <dbReference type="ChEBI" id="CHEBI:57967"/>
        <dbReference type="ChEBI" id="CHEBI:83767"/>
        <dbReference type="EC" id="3.1.1.106"/>
    </reaction>
</comment>
<comment type="subunit">
    <text evidence="1">Homodimer. Interacts with RNase III.</text>
</comment>
<comment type="similarity">
    <text evidence="1">Belongs to the MacroD-type family. YmdB subfamily.</text>
</comment>
<reference key="1">
    <citation type="submission" date="2010-02" db="EMBL/GenBank/DDBJ databases">
        <title>Complete sequence of Klebsiella variicola At-22.</title>
        <authorList>
            <consortium name="US DOE Joint Genome Institute"/>
            <person name="Lucas S."/>
            <person name="Copeland A."/>
            <person name="Lapidus A."/>
            <person name="Cheng J.-F."/>
            <person name="Bruce D."/>
            <person name="Goodwin L."/>
            <person name="Pitluck S."/>
            <person name="Davenport K."/>
            <person name="Brettin T."/>
            <person name="Detter J.C."/>
            <person name="Han C."/>
            <person name="Tapia R."/>
            <person name="Larimer F."/>
            <person name="Land M."/>
            <person name="Hauser L."/>
            <person name="Kyrpides N."/>
            <person name="Ivanova N."/>
            <person name="Pinto A."/>
            <person name="Currie C."/>
            <person name="Woyke T."/>
        </authorList>
    </citation>
    <scope>NUCLEOTIDE SEQUENCE [LARGE SCALE GENOMIC DNA]</scope>
    <source>
        <strain>At-22</strain>
    </source>
</reference>
<proteinExistence type="inferred from homology"/>
<protein>
    <recommendedName>
        <fullName evidence="1">O-acetyl-ADP-ribose deacetylase</fullName>
        <ecNumber evidence="1">3.1.1.106</ecNumber>
    </recommendedName>
    <alternativeName>
        <fullName evidence="1">Regulator of RNase III activity</fullName>
    </alternativeName>
</protein>
<sequence>MAVQPEVILGDITTLEVDVIVNAANPSLLGGGGVDGAIHRAAGPALLAACKQVLQQQGECPPGHAVITIAGDLPASAVIHTVGPVWHGGDRMEAQTLADAYKNSLQLAAANNYRSIAFPAISTGVYGYPKEEAAEIAVRTVTAFLTRYNPLERVLFVCFDEETAAIYRRLLASYP</sequence>
<feature type="chain" id="PRO_0000409480" description="O-acetyl-ADP-ribose deacetylase">
    <location>
        <begin position="1"/>
        <end position="175"/>
    </location>
</feature>
<feature type="domain" description="Macro" evidence="1">
    <location>
        <begin position="1"/>
        <end position="175"/>
    </location>
</feature>
<feature type="active site" description="Proton acceptor" evidence="1">
    <location>
        <position position="35"/>
    </location>
</feature>
<feature type="binding site" evidence="1">
    <location>
        <begin position="11"/>
        <end position="12"/>
    </location>
    <ligand>
        <name>substrate</name>
    </ligand>
</feature>
<feature type="binding site" evidence="1">
    <location>
        <position position="25"/>
    </location>
    <ligand>
        <name>substrate</name>
    </ligand>
</feature>
<feature type="binding site" evidence="1">
    <location>
        <begin position="33"/>
        <end position="35"/>
    </location>
    <ligand>
        <name>substrate</name>
    </ligand>
</feature>
<feature type="binding site" evidence="1">
    <location>
        <begin position="122"/>
        <end position="126"/>
    </location>
    <ligand>
        <name>substrate</name>
    </ligand>
</feature>
<evidence type="ECO:0000255" key="1">
    <source>
        <dbReference type="HAMAP-Rule" id="MF_01205"/>
    </source>
</evidence>
<accession>D3RKJ0</accession>
<organism>
    <name type="scientific">Klebsiella variicola (strain At-22)</name>
    <dbReference type="NCBI Taxonomy" id="640131"/>
    <lineage>
        <taxon>Bacteria</taxon>
        <taxon>Pseudomonadati</taxon>
        <taxon>Pseudomonadota</taxon>
        <taxon>Gammaproteobacteria</taxon>
        <taxon>Enterobacterales</taxon>
        <taxon>Enterobacteriaceae</taxon>
        <taxon>Klebsiella/Raoultella group</taxon>
        <taxon>Klebsiella</taxon>
        <taxon>Klebsiella pneumoniae complex</taxon>
    </lineage>
</organism>
<name>YMDB_KLEVT</name>
<dbReference type="EC" id="3.1.1.106" evidence="1"/>
<dbReference type="EMBL" id="CP001891">
    <property type="protein sequence ID" value="ADC59201.1"/>
    <property type="molecule type" value="Genomic_DNA"/>
</dbReference>
<dbReference type="RefSeq" id="WP_008805959.1">
    <property type="nucleotide sequence ID" value="NC_013850.1"/>
</dbReference>
<dbReference type="SMR" id="D3RKJ0"/>
<dbReference type="GeneID" id="93274010"/>
<dbReference type="KEGG" id="kva:Kvar_3321"/>
<dbReference type="HOGENOM" id="CLU_046550_5_1_6"/>
<dbReference type="GO" id="GO:0061463">
    <property type="term" value="F:O-acetyl-ADP-ribose deacetylase activity"/>
    <property type="evidence" value="ECO:0007669"/>
    <property type="project" value="UniProtKB-EC"/>
</dbReference>
<dbReference type="GO" id="GO:0001883">
    <property type="term" value="F:purine nucleoside binding"/>
    <property type="evidence" value="ECO:0007669"/>
    <property type="project" value="UniProtKB-UniRule"/>
</dbReference>
<dbReference type="GO" id="GO:0008428">
    <property type="term" value="F:ribonuclease inhibitor activity"/>
    <property type="evidence" value="ECO:0007669"/>
    <property type="project" value="UniProtKB-UniRule"/>
</dbReference>
<dbReference type="GO" id="GO:0042278">
    <property type="term" value="P:purine nucleoside metabolic process"/>
    <property type="evidence" value="ECO:0007669"/>
    <property type="project" value="UniProtKB-UniRule"/>
</dbReference>
<dbReference type="CDD" id="cd02908">
    <property type="entry name" value="Macro_OAADPr_deacetylase"/>
    <property type="match status" value="1"/>
</dbReference>
<dbReference type="Gene3D" id="3.40.220.10">
    <property type="entry name" value="Leucine Aminopeptidase, subunit E, domain 1"/>
    <property type="match status" value="1"/>
</dbReference>
<dbReference type="HAMAP" id="MF_01205">
    <property type="entry name" value="YmdB"/>
    <property type="match status" value="1"/>
</dbReference>
<dbReference type="InterPro" id="IPR002589">
    <property type="entry name" value="Macro_dom"/>
</dbReference>
<dbReference type="InterPro" id="IPR043472">
    <property type="entry name" value="Macro_dom-like"/>
</dbReference>
<dbReference type="InterPro" id="IPR024900">
    <property type="entry name" value="O-Ac-ADP-ribose_deAcase"/>
</dbReference>
<dbReference type="NCBIfam" id="NF001660">
    <property type="entry name" value="PRK00431.1-1"/>
    <property type="match status" value="1"/>
</dbReference>
<dbReference type="NCBIfam" id="NF001664">
    <property type="entry name" value="PRK00431.1-6"/>
    <property type="match status" value="1"/>
</dbReference>
<dbReference type="PANTHER" id="PTHR11106">
    <property type="entry name" value="GANGLIOSIDE INDUCED DIFFERENTIATION ASSOCIATED PROTEIN 2-RELATED"/>
    <property type="match status" value="1"/>
</dbReference>
<dbReference type="PANTHER" id="PTHR11106:SF27">
    <property type="entry name" value="MACRO DOMAIN-CONTAINING PROTEIN"/>
    <property type="match status" value="1"/>
</dbReference>
<dbReference type="Pfam" id="PF01661">
    <property type="entry name" value="Macro"/>
    <property type="match status" value="1"/>
</dbReference>
<dbReference type="SMART" id="SM00506">
    <property type="entry name" value="A1pp"/>
    <property type="match status" value="1"/>
</dbReference>
<dbReference type="SUPFAM" id="SSF52949">
    <property type="entry name" value="Macro domain-like"/>
    <property type="match status" value="1"/>
</dbReference>
<dbReference type="PROSITE" id="PS51154">
    <property type="entry name" value="MACRO"/>
    <property type="match status" value="1"/>
</dbReference>